<proteinExistence type="inferred from homology"/>
<accession>A0Q1J2</accession>
<evidence type="ECO:0000255" key="1">
    <source>
        <dbReference type="HAMAP-Rule" id="MF_00741"/>
    </source>
</evidence>
<organism>
    <name type="scientific">Clostridium novyi (strain NT)</name>
    <dbReference type="NCBI Taxonomy" id="386415"/>
    <lineage>
        <taxon>Bacteria</taxon>
        <taxon>Bacillati</taxon>
        <taxon>Bacillota</taxon>
        <taxon>Clostridia</taxon>
        <taxon>Eubacteriales</taxon>
        <taxon>Clostridiaceae</taxon>
        <taxon>Clostridium</taxon>
    </lineage>
</organism>
<keyword id="KW-0067">ATP-binding</keyword>
<keyword id="KW-0963">Cytoplasm</keyword>
<keyword id="KW-0436">Ligase</keyword>
<keyword id="KW-0547">Nucleotide-binding</keyword>
<keyword id="KW-0658">Purine biosynthesis</keyword>
<keyword id="KW-1185">Reference proteome</keyword>
<feature type="chain" id="PRO_1000046434" description="Phosphoribosylformylglycinamidine cyclo-ligase">
    <location>
        <begin position="1"/>
        <end position="331"/>
    </location>
</feature>
<reference key="1">
    <citation type="journal article" date="2006" name="Nat. Biotechnol.">
        <title>The genome and transcriptomes of the anti-tumor agent Clostridium novyi-NT.</title>
        <authorList>
            <person name="Bettegowda C."/>
            <person name="Huang X."/>
            <person name="Lin J."/>
            <person name="Cheong I."/>
            <person name="Kohli M."/>
            <person name="Szabo S.A."/>
            <person name="Zhang X."/>
            <person name="Diaz L.A. Jr."/>
            <person name="Velculescu V.E."/>
            <person name="Parmigiani G."/>
            <person name="Kinzler K.W."/>
            <person name="Vogelstein B."/>
            <person name="Zhou S."/>
        </authorList>
    </citation>
    <scope>NUCLEOTIDE SEQUENCE [LARGE SCALE GENOMIC DNA]</scope>
    <source>
        <strain>NT</strain>
    </source>
</reference>
<name>PUR5_CLONN</name>
<dbReference type="EC" id="6.3.3.1" evidence="1"/>
<dbReference type="EMBL" id="CP000382">
    <property type="protein sequence ID" value="ABK61544.1"/>
    <property type="molecule type" value="Genomic_DNA"/>
</dbReference>
<dbReference type="RefSeq" id="WP_011722488.1">
    <property type="nucleotide sequence ID" value="NC_008593.1"/>
</dbReference>
<dbReference type="SMR" id="A0Q1J2"/>
<dbReference type="STRING" id="386415.NT01CX_2421"/>
<dbReference type="KEGG" id="cno:NT01CX_2421"/>
<dbReference type="PATRIC" id="fig|386415.7.peg.1524"/>
<dbReference type="eggNOG" id="COG0150">
    <property type="taxonomic scope" value="Bacteria"/>
</dbReference>
<dbReference type="HOGENOM" id="CLU_047116_0_0_9"/>
<dbReference type="UniPathway" id="UPA00074">
    <property type="reaction ID" value="UER00129"/>
</dbReference>
<dbReference type="Proteomes" id="UP000008220">
    <property type="component" value="Chromosome"/>
</dbReference>
<dbReference type="GO" id="GO:0005829">
    <property type="term" value="C:cytosol"/>
    <property type="evidence" value="ECO:0007669"/>
    <property type="project" value="TreeGrafter"/>
</dbReference>
<dbReference type="GO" id="GO:0005524">
    <property type="term" value="F:ATP binding"/>
    <property type="evidence" value="ECO:0007669"/>
    <property type="project" value="UniProtKB-KW"/>
</dbReference>
<dbReference type="GO" id="GO:0004637">
    <property type="term" value="F:phosphoribosylamine-glycine ligase activity"/>
    <property type="evidence" value="ECO:0007669"/>
    <property type="project" value="TreeGrafter"/>
</dbReference>
<dbReference type="GO" id="GO:0004641">
    <property type="term" value="F:phosphoribosylformylglycinamidine cyclo-ligase activity"/>
    <property type="evidence" value="ECO:0007669"/>
    <property type="project" value="UniProtKB-UniRule"/>
</dbReference>
<dbReference type="GO" id="GO:0006189">
    <property type="term" value="P:'de novo' IMP biosynthetic process"/>
    <property type="evidence" value="ECO:0007669"/>
    <property type="project" value="UniProtKB-UniRule"/>
</dbReference>
<dbReference type="GO" id="GO:0046084">
    <property type="term" value="P:adenine biosynthetic process"/>
    <property type="evidence" value="ECO:0007669"/>
    <property type="project" value="TreeGrafter"/>
</dbReference>
<dbReference type="CDD" id="cd02196">
    <property type="entry name" value="PurM"/>
    <property type="match status" value="1"/>
</dbReference>
<dbReference type="FunFam" id="3.30.1330.10:FF:000001">
    <property type="entry name" value="Phosphoribosylformylglycinamidine cyclo-ligase"/>
    <property type="match status" value="1"/>
</dbReference>
<dbReference type="FunFam" id="3.90.650.10:FF:000011">
    <property type="entry name" value="Phosphoribosylformylglycinamidine cyclo-ligase"/>
    <property type="match status" value="1"/>
</dbReference>
<dbReference type="Gene3D" id="3.90.650.10">
    <property type="entry name" value="PurM-like C-terminal domain"/>
    <property type="match status" value="1"/>
</dbReference>
<dbReference type="Gene3D" id="3.30.1330.10">
    <property type="entry name" value="PurM-like, N-terminal domain"/>
    <property type="match status" value="1"/>
</dbReference>
<dbReference type="HAMAP" id="MF_00741">
    <property type="entry name" value="AIRS"/>
    <property type="match status" value="1"/>
</dbReference>
<dbReference type="InterPro" id="IPR010918">
    <property type="entry name" value="PurM-like_C_dom"/>
</dbReference>
<dbReference type="InterPro" id="IPR036676">
    <property type="entry name" value="PurM-like_C_sf"/>
</dbReference>
<dbReference type="InterPro" id="IPR016188">
    <property type="entry name" value="PurM-like_N"/>
</dbReference>
<dbReference type="InterPro" id="IPR036921">
    <property type="entry name" value="PurM-like_N_sf"/>
</dbReference>
<dbReference type="InterPro" id="IPR004733">
    <property type="entry name" value="PurM_cligase"/>
</dbReference>
<dbReference type="NCBIfam" id="TIGR00878">
    <property type="entry name" value="purM"/>
    <property type="match status" value="1"/>
</dbReference>
<dbReference type="PANTHER" id="PTHR10520:SF12">
    <property type="entry name" value="TRIFUNCTIONAL PURINE BIOSYNTHETIC PROTEIN ADENOSINE-3"/>
    <property type="match status" value="1"/>
</dbReference>
<dbReference type="PANTHER" id="PTHR10520">
    <property type="entry name" value="TRIFUNCTIONAL PURINE BIOSYNTHETIC PROTEIN ADENOSINE-3-RELATED"/>
    <property type="match status" value="1"/>
</dbReference>
<dbReference type="Pfam" id="PF00586">
    <property type="entry name" value="AIRS"/>
    <property type="match status" value="1"/>
</dbReference>
<dbReference type="Pfam" id="PF02769">
    <property type="entry name" value="AIRS_C"/>
    <property type="match status" value="1"/>
</dbReference>
<dbReference type="SUPFAM" id="SSF56042">
    <property type="entry name" value="PurM C-terminal domain-like"/>
    <property type="match status" value="1"/>
</dbReference>
<dbReference type="SUPFAM" id="SSF55326">
    <property type="entry name" value="PurM N-terminal domain-like"/>
    <property type="match status" value="1"/>
</dbReference>
<sequence>MATYKDAGVNIEEGYKAVSLMKNYAAKTFTKGVINDLGSFAGMFELSGYKTPVLVSGTDGVGTKLKIAFDMKKYDTVGIDCVAMCVNDILCHGAKPLFFLDYIACGKLEAENAADLVRGVSDGCIDAGCSLIGGETAEMPGFYKEGEYDVAGFCVGVVEKDEIIDGSKIENGDVLIGIESTGIHSNGYSLVRKLIKDFNEDFNGEKIGNVLLTPTKIYVKTVLELIKKYNIHGMAHITGGGFYENIPRMFKGDFTAVINKGSFKVPEIFNHIMSLGVEEEHMYNTFNMGIGYVLCVKEEDAENIIRYIEKMGSKAYKIGHVEAGGHGVCLK</sequence>
<gene>
    <name evidence="1" type="primary">purM</name>
    <name type="ordered locus">NT01CX_2421</name>
</gene>
<protein>
    <recommendedName>
        <fullName evidence="1">Phosphoribosylformylglycinamidine cyclo-ligase</fullName>
        <ecNumber evidence="1">6.3.3.1</ecNumber>
    </recommendedName>
    <alternativeName>
        <fullName evidence="1">AIR synthase</fullName>
    </alternativeName>
    <alternativeName>
        <fullName evidence="1">AIRS</fullName>
    </alternativeName>
    <alternativeName>
        <fullName evidence="1">Phosphoribosyl-aminoimidazole synthetase</fullName>
    </alternativeName>
</protein>
<comment type="catalytic activity">
    <reaction evidence="1">
        <text>2-formamido-N(1)-(5-O-phospho-beta-D-ribosyl)acetamidine + ATP = 5-amino-1-(5-phospho-beta-D-ribosyl)imidazole + ADP + phosphate + H(+)</text>
        <dbReference type="Rhea" id="RHEA:23032"/>
        <dbReference type="ChEBI" id="CHEBI:15378"/>
        <dbReference type="ChEBI" id="CHEBI:30616"/>
        <dbReference type="ChEBI" id="CHEBI:43474"/>
        <dbReference type="ChEBI" id="CHEBI:137981"/>
        <dbReference type="ChEBI" id="CHEBI:147287"/>
        <dbReference type="ChEBI" id="CHEBI:456216"/>
        <dbReference type="EC" id="6.3.3.1"/>
    </reaction>
</comment>
<comment type="pathway">
    <text evidence="1">Purine metabolism; IMP biosynthesis via de novo pathway; 5-amino-1-(5-phospho-D-ribosyl)imidazole from N(2)-formyl-N(1)-(5-phospho-D-ribosyl)glycinamide: step 2/2.</text>
</comment>
<comment type="subcellular location">
    <subcellularLocation>
        <location evidence="1">Cytoplasm</location>
    </subcellularLocation>
</comment>
<comment type="similarity">
    <text evidence="1">Belongs to the AIR synthase family.</text>
</comment>